<keyword id="KW-0249">Electron transport</keyword>
<keyword id="KW-0349">Heme</keyword>
<keyword id="KW-0408">Iron</keyword>
<keyword id="KW-0472">Membrane</keyword>
<keyword id="KW-0479">Metal-binding</keyword>
<keyword id="KW-0496">Mitochondrion</keyword>
<keyword id="KW-0999">Mitochondrion inner membrane</keyword>
<keyword id="KW-0679">Respiratory chain</keyword>
<keyword id="KW-0812">Transmembrane</keyword>
<keyword id="KW-1133">Transmembrane helix</keyword>
<keyword id="KW-0813">Transport</keyword>
<keyword id="KW-0830">Ubiquinone</keyword>
<accession>Q5VJ58</accession>
<sequence length="379" mass="42555">MTNIRKTHPLTKIVNSSFIDLPAPSNISSWWNFGSLLGACLILQIITGLFLAMHYTADTTTAFSSVAHICRDVNYGWVIRYLHANGASMFFLCLFIHVGRGLYYGSFTLSETWNIGIILLFTVMATAFMGYVLPWGQMSFWGATVITNLLSATPYVGTDLVEWIWGGFSVDKATLTRFFAFHFILPFIITAFVMIHLLFLHETGSNNPLGIPSNSDKIPFHPYYTIKDLVGLILLILPLMTLVFFSPDLLGDPDNYTPANPLNTPPHIKPEWYFLFAYAILRSIPNKLGGVLALIFSILILAIIPLLQTAKQQSMMFRPLSQCLLWILVADLCTLTWIGGQLVEHPFIAIGQMASILYFSLILVIMPTVSLIENKMLKW</sequence>
<organism>
    <name type="scientific">Indri indri</name>
    <name type="common">Indri</name>
    <dbReference type="NCBI Taxonomy" id="34827"/>
    <lineage>
        <taxon>Eukaryota</taxon>
        <taxon>Metazoa</taxon>
        <taxon>Chordata</taxon>
        <taxon>Craniata</taxon>
        <taxon>Vertebrata</taxon>
        <taxon>Euteleostomi</taxon>
        <taxon>Mammalia</taxon>
        <taxon>Eutheria</taxon>
        <taxon>Euarchontoglires</taxon>
        <taxon>Primates</taxon>
        <taxon>Strepsirrhini</taxon>
        <taxon>Lemuriformes</taxon>
        <taxon>Indriidae</taxon>
        <taxon>Indri</taxon>
    </lineage>
</organism>
<evidence type="ECO:0000250" key="1"/>
<evidence type="ECO:0000250" key="2">
    <source>
        <dbReference type="UniProtKB" id="P00157"/>
    </source>
</evidence>
<evidence type="ECO:0000255" key="3">
    <source>
        <dbReference type="PROSITE-ProRule" id="PRU00967"/>
    </source>
</evidence>
<evidence type="ECO:0000255" key="4">
    <source>
        <dbReference type="PROSITE-ProRule" id="PRU00968"/>
    </source>
</evidence>
<proteinExistence type="inferred from homology"/>
<feature type="chain" id="PRO_0000061063" description="Cytochrome b">
    <location>
        <begin position="1"/>
        <end position="379"/>
    </location>
</feature>
<feature type="transmembrane region" description="Helical" evidence="2">
    <location>
        <begin position="33"/>
        <end position="53"/>
    </location>
</feature>
<feature type="transmembrane region" description="Helical" evidence="2">
    <location>
        <begin position="77"/>
        <end position="98"/>
    </location>
</feature>
<feature type="transmembrane region" description="Helical" evidence="2">
    <location>
        <begin position="113"/>
        <end position="133"/>
    </location>
</feature>
<feature type="transmembrane region" description="Helical" evidence="2">
    <location>
        <begin position="178"/>
        <end position="198"/>
    </location>
</feature>
<feature type="transmembrane region" description="Helical" evidence="2">
    <location>
        <begin position="226"/>
        <end position="246"/>
    </location>
</feature>
<feature type="transmembrane region" description="Helical" evidence="2">
    <location>
        <begin position="288"/>
        <end position="308"/>
    </location>
</feature>
<feature type="transmembrane region" description="Helical" evidence="2">
    <location>
        <begin position="320"/>
        <end position="340"/>
    </location>
</feature>
<feature type="transmembrane region" description="Helical" evidence="2">
    <location>
        <begin position="347"/>
        <end position="367"/>
    </location>
</feature>
<feature type="binding site" description="axial binding residue" evidence="2">
    <location>
        <position position="83"/>
    </location>
    <ligand>
        <name>heme b</name>
        <dbReference type="ChEBI" id="CHEBI:60344"/>
        <label>b562</label>
    </ligand>
    <ligandPart>
        <name>Fe</name>
        <dbReference type="ChEBI" id="CHEBI:18248"/>
    </ligandPart>
</feature>
<feature type="binding site" description="axial binding residue" evidence="2">
    <location>
        <position position="97"/>
    </location>
    <ligand>
        <name>heme b</name>
        <dbReference type="ChEBI" id="CHEBI:60344"/>
        <label>b566</label>
    </ligand>
    <ligandPart>
        <name>Fe</name>
        <dbReference type="ChEBI" id="CHEBI:18248"/>
    </ligandPart>
</feature>
<feature type="binding site" description="axial binding residue" evidence="2">
    <location>
        <position position="182"/>
    </location>
    <ligand>
        <name>heme b</name>
        <dbReference type="ChEBI" id="CHEBI:60344"/>
        <label>b562</label>
    </ligand>
    <ligandPart>
        <name>Fe</name>
        <dbReference type="ChEBI" id="CHEBI:18248"/>
    </ligandPart>
</feature>
<feature type="binding site" description="axial binding residue" evidence="2">
    <location>
        <position position="196"/>
    </location>
    <ligand>
        <name>heme b</name>
        <dbReference type="ChEBI" id="CHEBI:60344"/>
        <label>b566</label>
    </ligand>
    <ligandPart>
        <name>Fe</name>
        <dbReference type="ChEBI" id="CHEBI:18248"/>
    </ligandPart>
</feature>
<feature type="binding site" evidence="2">
    <location>
        <position position="201"/>
    </location>
    <ligand>
        <name>a ubiquinone</name>
        <dbReference type="ChEBI" id="CHEBI:16389"/>
    </ligand>
</feature>
<reference key="1">
    <citation type="submission" date="2003-10" db="EMBL/GenBank/DDBJ databases">
        <title>61 primate SINEs and the evolution of strepsirrhines.</title>
        <authorList>
            <person name="Roos C."/>
            <person name="Schmitz J."/>
            <person name="Zischler H."/>
        </authorList>
    </citation>
    <scope>NUCLEOTIDE SEQUENCE [GENOMIC DNA]</scope>
</reference>
<dbReference type="EMBL" id="AY441455">
    <property type="protein sequence ID" value="AAS00136.1"/>
    <property type="molecule type" value="Genomic_DNA"/>
</dbReference>
<dbReference type="SMR" id="Q5VJ58"/>
<dbReference type="GO" id="GO:0005743">
    <property type="term" value="C:mitochondrial inner membrane"/>
    <property type="evidence" value="ECO:0007669"/>
    <property type="project" value="UniProtKB-SubCell"/>
</dbReference>
<dbReference type="GO" id="GO:0045275">
    <property type="term" value="C:respiratory chain complex III"/>
    <property type="evidence" value="ECO:0007669"/>
    <property type="project" value="InterPro"/>
</dbReference>
<dbReference type="GO" id="GO:0046872">
    <property type="term" value="F:metal ion binding"/>
    <property type="evidence" value="ECO:0007669"/>
    <property type="project" value="UniProtKB-KW"/>
</dbReference>
<dbReference type="GO" id="GO:0008121">
    <property type="term" value="F:ubiquinol-cytochrome-c reductase activity"/>
    <property type="evidence" value="ECO:0007669"/>
    <property type="project" value="InterPro"/>
</dbReference>
<dbReference type="GO" id="GO:0006122">
    <property type="term" value="P:mitochondrial electron transport, ubiquinol to cytochrome c"/>
    <property type="evidence" value="ECO:0007669"/>
    <property type="project" value="TreeGrafter"/>
</dbReference>
<dbReference type="CDD" id="cd00290">
    <property type="entry name" value="cytochrome_b_C"/>
    <property type="match status" value="1"/>
</dbReference>
<dbReference type="CDD" id="cd00284">
    <property type="entry name" value="Cytochrome_b_N"/>
    <property type="match status" value="1"/>
</dbReference>
<dbReference type="FunFam" id="1.20.810.10:FF:000002">
    <property type="entry name" value="Cytochrome b"/>
    <property type="match status" value="1"/>
</dbReference>
<dbReference type="Gene3D" id="1.20.810.10">
    <property type="entry name" value="Cytochrome Bc1 Complex, Chain C"/>
    <property type="match status" value="1"/>
</dbReference>
<dbReference type="InterPro" id="IPR005798">
    <property type="entry name" value="Cyt_b/b6_C"/>
</dbReference>
<dbReference type="InterPro" id="IPR036150">
    <property type="entry name" value="Cyt_b/b6_C_sf"/>
</dbReference>
<dbReference type="InterPro" id="IPR005797">
    <property type="entry name" value="Cyt_b/b6_N"/>
</dbReference>
<dbReference type="InterPro" id="IPR027387">
    <property type="entry name" value="Cytb/b6-like_sf"/>
</dbReference>
<dbReference type="InterPro" id="IPR030689">
    <property type="entry name" value="Cytochrome_b"/>
</dbReference>
<dbReference type="InterPro" id="IPR048260">
    <property type="entry name" value="Cytochrome_b_C_euk/bac"/>
</dbReference>
<dbReference type="InterPro" id="IPR048259">
    <property type="entry name" value="Cytochrome_b_N_euk/bac"/>
</dbReference>
<dbReference type="InterPro" id="IPR016174">
    <property type="entry name" value="Di-haem_cyt_TM"/>
</dbReference>
<dbReference type="PANTHER" id="PTHR19271">
    <property type="entry name" value="CYTOCHROME B"/>
    <property type="match status" value="1"/>
</dbReference>
<dbReference type="PANTHER" id="PTHR19271:SF16">
    <property type="entry name" value="CYTOCHROME B"/>
    <property type="match status" value="1"/>
</dbReference>
<dbReference type="Pfam" id="PF00032">
    <property type="entry name" value="Cytochrom_B_C"/>
    <property type="match status" value="1"/>
</dbReference>
<dbReference type="Pfam" id="PF00033">
    <property type="entry name" value="Cytochrome_B"/>
    <property type="match status" value="1"/>
</dbReference>
<dbReference type="PIRSF" id="PIRSF038885">
    <property type="entry name" value="COB"/>
    <property type="match status" value="1"/>
</dbReference>
<dbReference type="SUPFAM" id="SSF81648">
    <property type="entry name" value="a domain/subunit of cytochrome bc1 complex (Ubiquinol-cytochrome c reductase)"/>
    <property type="match status" value="1"/>
</dbReference>
<dbReference type="SUPFAM" id="SSF81342">
    <property type="entry name" value="Transmembrane di-heme cytochromes"/>
    <property type="match status" value="1"/>
</dbReference>
<dbReference type="PROSITE" id="PS51003">
    <property type="entry name" value="CYTB_CTER"/>
    <property type="match status" value="1"/>
</dbReference>
<dbReference type="PROSITE" id="PS51002">
    <property type="entry name" value="CYTB_NTER"/>
    <property type="match status" value="1"/>
</dbReference>
<protein>
    <recommendedName>
        <fullName>Cytochrome b</fullName>
    </recommendedName>
    <alternativeName>
        <fullName>Complex III subunit 3</fullName>
    </alternativeName>
    <alternativeName>
        <fullName>Complex III subunit III</fullName>
    </alternativeName>
    <alternativeName>
        <fullName>Cytochrome b-c1 complex subunit 3</fullName>
    </alternativeName>
    <alternativeName>
        <fullName>Ubiquinol-cytochrome-c reductase complex cytochrome b subunit</fullName>
    </alternativeName>
</protein>
<comment type="function">
    <text evidence="2">Component of the ubiquinol-cytochrome c reductase complex (complex III or cytochrome b-c1 complex) that is part of the mitochondrial respiratory chain. The b-c1 complex mediates electron transfer from ubiquinol to cytochrome c. Contributes to the generation of a proton gradient across the mitochondrial membrane that is then used for ATP synthesis.</text>
</comment>
<comment type="cofactor">
    <cofactor evidence="2">
        <name>heme b</name>
        <dbReference type="ChEBI" id="CHEBI:60344"/>
    </cofactor>
    <text evidence="2">Binds 2 heme b groups non-covalently.</text>
</comment>
<comment type="subunit">
    <text evidence="2">The cytochrome bc1 complex contains 11 subunits: 3 respiratory subunits (MT-CYB, CYC1 and UQCRFS1), 2 core proteins (UQCRC1 and UQCRC2) and 6 low-molecular weight proteins (UQCRH/QCR6, UQCRB/QCR7, UQCRQ/QCR8, UQCR10/QCR9, UQCR11/QCR10 and a cleavage product of UQCRFS1). This cytochrome bc1 complex then forms a dimer.</text>
</comment>
<comment type="subcellular location">
    <subcellularLocation>
        <location evidence="2">Mitochondrion inner membrane</location>
        <topology evidence="2">Multi-pass membrane protein</topology>
    </subcellularLocation>
</comment>
<comment type="miscellaneous">
    <text evidence="1">Heme 1 (or BL or b562) is low-potential and absorbs at about 562 nm, and heme 2 (or BH or b566) is high-potential and absorbs at about 566 nm.</text>
</comment>
<comment type="similarity">
    <text evidence="3 4">Belongs to the cytochrome b family.</text>
</comment>
<comment type="caution">
    <text evidence="2">The full-length protein contains only eight transmembrane helices, not nine as predicted by bioinformatics tools.</text>
</comment>
<gene>
    <name type="primary">MT-CYB</name>
    <name type="synonym">COB</name>
    <name type="synonym">CYTB</name>
    <name type="synonym">MTCYB</name>
</gene>
<name>CYB_INDIN</name>
<geneLocation type="mitochondrion"/>